<keyword id="KW-0963">Cytoplasm</keyword>
<keyword id="KW-0312">Gluconeogenesis</keyword>
<keyword id="KW-0324">Glycolysis</keyword>
<keyword id="KW-0413">Isomerase</keyword>
<sequence>MRHPLVMGNWKLNGSRHMVHELVSNLRKELAGVAGCAVAIAPPEMYIDMAKREAEGSHIMLGAQNVDLNLSGAFTGETSAAMLKDIGAQYIIIGHSERRTYHKESDELIAKKFAVLKEQGLTPVLCIGETEAENEAGKTEEVCARQIDAVLKTQGAAAFEGAVIAYEPVWAIGTGKSATPAQAQAVHKFIRDHIAKVDANIAEQVIIQYGGSVNASNAAELFAQPDIDGALVGGASLKADAFAVIVKAAEAAKQA</sequence>
<gene>
    <name evidence="1" type="primary">tpiA</name>
    <name type="ordered locus">ECSE_4208</name>
</gene>
<feature type="chain" id="PRO_1000096496" description="Triosephosphate isomerase">
    <location>
        <begin position="1"/>
        <end position="255"/>
    </location>
</feature>
<feature type="active site" description="Electrophile" evidence="1">
    <location>
        <position position="95"/>
    </location>
</feature>
<feature type="active site" description="Proton acceptor" evidence="1">
    <location>
        <position position="167"/>
    </location>
</feature>
<feature type="binding site" evidence="1">
    <location>
        <begin position="9"/>
        <end position="11"/>
    </location>
    <ligand>
        <name>substrate</name>
    </ligand>
</feature>
<feature type="binding site" evidence="1">
    <location>
        <position position="173"/>
    </location>
    <ligand>
        <name>substrate</name>
    </ligand>
</feature>
<feature type="binding site" evidence="1">
    <location>
        <position position="212"/>
    </location>
    <ligand>
        <name>substrate</name>
    </ligand>
</feature>
<feature type="binding site" evidence="1">
    <location>
        <begin position="233"/>
        <end position="234"/>
    </location>
    <ligand>
        <name>substrate</name>
    </ligand>
</feature>
<reference key="1">
    <citation type="journal article" date="2008" name="DNA Res.">
        <title>Complete genome sequence and comparative analysis of the wild-type commensal Escherichia coli strain SE11 isolated from a healthy adult.</title>
        <authorList>
            <person name="Oshima K."/>
            <person name="Toh H."/>
            <person name="Ogura Y."/>
            <person name="Sasamoto H."/>
            <person name="Morita H."/>
            <person name="Park S.-H."/>
            <person name="Ooka T."/>
            <person name="Iyoda S."/>
            <person name="Taylor T.D."/>
            <person name="Hayashi T."/>
            <person name="Itoh K."/>
            <person name="Hattori M."/>
        </authorList>
    </citation>
    <scope>NUCLEOTIDE SEQUENCE [LARGE SCALE GENOMIC DNA]</scope>
    <source>
        <strain>SE11</strain>
    </source>
</reference>
<name>TPIS_ECOSE</name>
<comment type="function">
    <text evidence="1">Involved in the gluconeogenesis. Catalyzes stereospecifically the conversion of dihydroxyacetone phosphate (DHAP) to D-glyceraldehyde-3-phosphate (G3P).</text>
</comment>
<comment type="catalytic activity">
    <reaction evidence="1">
        <text>D-glyceraldehyde 3-phosphate = dihydroxyacetone phosphate</text>
        <dbReference type="Rhea" id="RHEA:18585"/>
        <dbReference type="ChEBI" id="CHEBI:57642"/>
        <dbReference type="ChEBI" id="CHEBI:59776"/>
        <dbReference type="EC" id="5.3.1.1"/>
    </reaction>
</comment>
<comment type="pathway">
    <text evidence="1">Carbohydrate biosynthesis; gluconeogenesis.</text>
</comment>
<comment type="pathway">
    <text evidence="1">Carbohydrate degradation; glycolysis; D-glyceraldehyde 3-phosphate from glycerone phosphate: step 1/1.</text>
</comment>
<comment type="subunit">
    <text evidence="1">Homodimer.</text>
</comment>
<comment type="subcellular location">
    <subcellularLocation>
        <location evidence="1">Cytoplasm</location>
    </subcellularLocation>
</comment>
<comment type="similarity">
    <text evidence="1">Belongs to the triosephosphate isomerase family.</text>
</comment>
<organism>
    <name type="scientific">Escherichia coli (strain SE11)</name>
    <dbReference type="NCBI Taxonomy" id="409438"/>
    <lineage>
        <taxon>Bacteria</taxon>
        <taxon>Pseudomonadati</taxon>
        <taxon>Pseudomonadota</taxon>
        <taxon>Gammaproteobacteria</taxon>
        <taxon>Enterobacterales</taxon>
        <taxon>Enterobacteriaceae</taxon>
        <taxon>Escherichia</taxon>
    </lineage>
</organism>
<accession>B6I4R2</accession>
<protein>
    <recommendedName>
        <fullName evidence="1">Triosephosphate isomerase</fullName>
        <shortName evidence="1">TIM</shortName>
        <shortName evidence="1">TPI</shortName>
        <ecNumber evidence="1">5.3.1.1</ecNumber>
    </recommendedName>
    <alternativeName>
        <fullName evidence="1">Triose-phosphate isomerase</fullName>
    </alternativeName>
</protein>
<proteinExistence type="inferred from homology"/>
<evidence type="ECO:0000255" key="1">
    <source>
        <dbReference type="HAMAP-Rule" id="MF_00147"/>
    </source>
</evidence>
<dbReference type="EC" id="5.3.1.1" evidence="1"/>
<dbReference type="EMBL" id="AP009240">
    <property type="protein sequence ID" value="BAG79732.1"/>
    <property type="molecule type" value="Genomic_DNA"/>
</dbReference>
<dbReference type="RefSeq" id="WP_001216325.1">
    <property type="nucleotide sequence ID" value="NC_011415.1"/>
</dbReference>
<dbReference type="SMR" id="B6I4R2"/>
<dbReference type="GeneID" id="93777979"/>
<dbReference type="KEGG" id="ecy:ECSE_4208"/>
<dbReference type="HOGENOM" id="CLU_024251_2_1_6"/>
<dbReference type="UniPathway" id="UPA00109">
    <property type="reaction ID" value="UER00189"/>
</dbReference>
<dbReference type="UniPathway" id="UPA00138"/>
<dbReference type="Proteomes" id="UP000008199">
    <property type="component" value="Chromosome"/>
</dbReference>
<dbReference type="GO" id="GO:0005829">
    <property type="term" value="C:cytosol"/>
    <property type="evidence" value="ECO:0007669"/>
    <property type="project" value="TreeGrafter"/>
</dbReference>
<dbReference type="GO" id="GO:0004807">
    <property type="term" value="F:triose-phosphate isomerase activity"/>
    <property type="evidence" value="ECO:0007669"/>
    <property type="project" value="UniProtKB-UniRule"/>
</dbReference>
<dbReference type="GO" id="GO:0006094">
    <property type="term" value="P:gluconeogenesis"/>
    <property type="evidence" value="ECO:0007669"/>
    <property type="project" value="UniProtKB-UniRule"/>
</dbReference>
<dbReference type="GO" id="GO:0046166">
    <property type="term" value="P:glyceraldehyde-3-phosphate biosynthetic process"/>
    <property type="evidence" value="ECO:0007669"/>
    <property type="project" value="TreeGrafter"/>
</dbReference>
<dbReference type="GO" id="GO:0019563">
    <property type="term" value="P:glycerol catabolic process"/>
    <property type="evidence" value="ECO:0007669"/>
    <property type="project" value="TreeGrafter"/>
</dbReference>
<dbReference type="GO" id="GO:0006096">
    <property type="term" value="P:glycolytic process"/>
    <property type="evidence" value="ECO:0007669"/>
    <property type="project" value="UniProtKB-UniRule"/>
</dbReference>
<dbReference type="CDD" id="cd00311">
    <property type="entry name" value="TIM"/>
    <property type="match status" value="1"/>
</dbReference>
<dbReference type="FunFam" id="3.20.20.70:FF:000020">
    <property type="entry name" value="Triosephosphate isomerase"/>
    <property type="match status" value="1"/>
</dbReference>
<dbReference type="Gene3D" id="3.20.20.70">
    <property type="entry name" value="Aldolase class I"/>
    <property type="match status" value="1"/>
</dbReference>
<dbReference type="HAMAP" id="MF_00147_B">
    <property type="entry name" value="TIM_B"/>
    <property type="match status" value="1"/>
</dbReference>
<dbReference type="InterPro" id="IPR013785">
    <property type="entry name" value="Aldolase_TIM"/>
</dbReference>
<dbReference type="InterPro" id="IPR035990">
    <property type="entry name" value="TIM_sf"/>
</dbReference>
<dbReference type="InterPro" id="IPR022896">
    <property type="entry name" value="TrioseP_Isoase_bac/euk"/>
</dbReference>
<dbReference type="InterPro" id="IPR000652">
    <property type="entry name" value="Triosephosphate_isomerase"/>
</dbReference>
<dbReference type="InterPro" id="IPR020861">
    <property type="entry name" value="Triosephosphate_isomerase_AS"/>
</dbReference>
<dbReference type="NCBIfam" id="TIGR00419">
    <property type="entry name" value="tim"/>
    <property type="match status" value="1"/>
</dbReference>
<dbReference type="PANTHER" id="PTHR21139">
    <property type="entry name" value="TRIOSEPHOSPHATE ISOMERASE"/>
    <property type="match status" value="1"/>
</dbReference>
<dbReference type="PANTHER" id="PTHR21139:SF42">
    <property type="entry name" value="TRIOSEPHOSPHATE ISOMERASE"/>
    <property type="match status" value="1"/>
</dbReference>
<dbReference type="Pfam" id="PF00121">
    <property type="entry name" value="TIM"/>
    <property type="match status" value="1"/>
</dbReference>
<dbReference type="SUPFAM" id="SSF51351">
    <property type="entry name" value="Triosephosphate isomerase (TIM)"/>
    <property type="match status" value="1"/>
</dbReference>
<dbReference type="PROSITE" id="PS00171">
    <property type="entry name" value="TIM_1"/>
    <property type="match status" value="1"/>
</dbReference>
<dbReference type="PROSITE" id="PS51440">
    <property type="entry name" value="TIM_2"/>
    <property type="match status" value="1"/>
</dbReference>